<comment type="function">
    <text evidence="5 7 8 9">Plays an essential role in the Tl receptor signaling pathway that establishes embryonic dorsoventral polarity; the signal directs import of dl into ventral and ventrolateral nuclei, thereby establishing dorsoventral polarity. Tub recruits pll to the plasma membrane and protein-protein interaction activates pll.</text>
</comment>
<comment type="catalytic activity">
    <reaction evidence="9">
        <text>L-seryl-[protein] + ATP = O-phospho-L-seryl-[protein] + ADP + H(+)</text>
        <dbReference type="Rhea" id="RHEA:17989"/>
        <dbReference type="Rhea" id="RHEA-COMP:9863"/>
        <dbReference type="Rhea" id="RHEA-COMP:11604"/>
        <dbReference type="ChEBI" id="CHEBI:15378"/>
        <dbReference type="ChEBI" id="CHEBI:29999"/>
        <dbReference type="ChEBI" id="CHEBI:30616"/>
        <dbReference type="ChEBI" id="CHEBI:83421"/>
        <dbReference type="ChEBI" id="CHEBI:456216"/>
        <dbReference type="EC" id="2.7.11.1"/>
    </reaction>
</comment>
<comment type="catalytic activity">
    <reaction evidence="9">
        <text>L-threonyl-[protein] + ATP = O-phospho-L-threonyl-[protein] + ADP + H(+)</text>
        <dbReference type="Rhea" id="RHEA:46608"/>
        <dbReference type="Rhea" id="RHEA-COMP:11060"/>
        <dbReference type="Rhea" id="RHEA-COMP:11605"/>
        <dbReference type="ChEBI" id="CHEBI:15378"/>
        <dbReference type="ChEBI" id="CHEBI:30013"/>
        <dbReference type="ChEBI" id="CHEBI:30616"/>
        <dbReference type="ChEBI" id="CHEBI:61977"/>
        <dbReference type="ChEBI" id="CHEBI:456216"/>
        <dbReference type="EC" id="2.7.11.1"/>
    </reaction>
</comment>
<comment type="subunit">
    <text evidence="5 6 7 8">Interacts (via Death domain) with tub (via Death domain). Interacts with Pellino (Pli).</text>
</comment>
<comment type="interaction">
    <interactant intactId="EBI-115059">
        <id>Q05652</id>
    </interactant>
    <interactant intactId="EBI-93181">
        <id>P22812</id>
        <label>tub</label>
    </interactant>
    <organismsDiffer>false</organismsDiffer>
    <experiments>9</experiments>
</comment>
<comment type="subcellular location">
    <subcellularLocation>
        <location evidence="8">Cell membrane</location>
    </subcellularLocation>
    <subcellularLocation>
        <location evidence="8">Cytoplasm</location>
    </subcellularLocation>
    <text>Associates with the plasma membrane during interphase syncytial blastoderm embryos, more specifically at the membrane invaginations around the nuclei.</text>
</comment>
<comment type="developmental stage">
    <text evidence="9">Expressed both maternally and zygotically with low levels of expression throughout the life cycle.</text>
</comment>
<comment type="similarity">
    <text evidence="10">Belongs to the protein kinase superfamily. TKL Ser/Thr protein kinase family. Pelle subfamily.</text>
</comment>
<comment type="sequence caution" evidence="10">
    <conflict type="erroneous termination">
        <sequence resource="EMBL-CDS" id="AAL39802"/>
    </conflict>
    <text>Truncated C-terminus.</text>
</comment>
<reference key="1">
    <citation type="journal article" date="1993" name="Cell">
        <title>Pelle encodes a protein kinase required to establish dorsoventral polarity in the Drosophila embryo.</title>
        <authorList>
            <person name="Shelton C.A."/>
            <person name="Wasserman S.A."/>
        </authorList>
    </citation>
    <scope>NUCLEOTIDE SEQUENCE [MRNA]</scope>
    <scope>FUNCTION</scope>
    <scope>CATALYTIC ACTIVITY</scope>
    <scope>DEVELOPMENTAL STAGE</scope>
    <scope>MUTAGENESIS OF LYS-240; ASP-346 AND ALA-350</scope>
    <source>
        <tissue>Embryo</tissue>
    </source>
</reference>
<reference key="2">
    <citation type="journal article" date="2000" name="Science">
        <title>The genome sequence of Drosophila melanogaster.</title>
        <authorList>
            <person name="Adams M.D."/>
            <person name="Celniker S.E."/>
            <person name="Holt R.A."/>
            <person name="Evans C.A."/>
            <person name="Gocayne J.D."/>
            <person name="Amanatides P.G."/>
            <person name="Scherer S.E."/>
            <person name="Li P.W."/>
            <person name="Hoskins R.A."/>
            <person name="Galle R.F."/>
            <person name="George R.A."/>
            <person name="Lewis S.E."/>
            <person name="Richards S."/>
            <person name="Ashburner M."/>
            <person name="Henderson S.N."/>
            <person name="Sutton G.G."/>
            <person name="Wortman J.R."/>
            <person name="Yandell M.D."/>
            <person name="Zhang Q."/>
            <person name="Chen L.X."/>
            <person name="Brandon R.C."/>
            <person name="Rogers Y.-H.C."/>
            <person name="Blazej R.G."/>
            <person name="Champe M."/>
            <person name="Pfeiffer B.D."/>
            <person name="Wan K.H."/>
            <person name="Doyle C."/>
            <person name="Baxter E.G."/>
            <person name="Helt G."/>
            <person name="Nelson C.R."/>
            <person name="Miklos G.L.G."/>
            <person name="Abril J.F."/>
            <person name="Agbayani A."/>
            <person name="An H.-J."/>
            <person name="Andrews-Pfannkoch C."/>
            <person name="Baldwin D."/>
            <person name="Ballew R.M."/>
            <person name="Basu A."/>
            <person name="Baxendale J."/>
            <person name="Bayraktaroglu L."/>
            <person name="Beasley E.M."/>
            <person name="Beeson K.Y."/>
            <person name="Benos P.V."/>
            <person name="Berman B.P."/>
            <person name="Bhandari D."/>
            <person name="Bolshakov S."/>
            <person name="Borkova D."/>
            <person name="Botchan M.R."/>
            <person name="Bouck J."/>
            <person name="Brokstein P."/>
            <person name="Brottier P."/>
            <person name="Burtis K.C."/>
            <person name="Busam D.A."/>
            <person name="Butler H."/>
            <person name="Cadieu E."/>
            <person name="Center A."/>
            <person name="Chandra I."/>
            <person name="Cherry J.M."/>
            <person name="Cawley S."/>
            <person name="Dahlke C."/>
            <person name="Davenport L.B."/>
            <person name="Davies P."/>
            <person name="de Pablos B."/>
            <person name="Delcher A."/>
            <person name="Deng Z."/>
            <person name="Mays A.D."/>
            <person name="Dew I."/>
            <person name="Dietz S.M."/>
            <person name="Dodson K."/>
            <person name="Doup L.E."/>
            <person name="Downes M."/>
            <person name="Dugan-Rocha S."/>
            <person name="Dunkov B.C."/>
            <person name="Dunn P."/>
            <person name="Durbin K.J."/>
            <person name="Evangelista C.C."/>
            <person name="Ferraz C."/>
            <person name="Ferriera S."/>
            <person name="Fleischmann W."/>
            <person name="Fosler C."/>
            <person name="Gabrielian A.E."/>
            <person name="Garg N.S."/>
            <person name="Gelbart W.M."/>
            <person name="Glasser K."/>
            <person name="Glodek A."/>
            <person name="Gong F."/>
            <person name="Gorrell J.H."/>
            <person name="Gu Z."/>
            <person name="Guan P."/>
            <person name="Harris M."/>
            <person name="Harris N.L."/>
            <person name="Harvey D.A."/>
            <person name="Heiman T.J."/>
            <person name="Hernandez J.R."/>
            <person name="Houck J."/>
            <person name="Hostin D."/>
            <person name="Houston K.A."/>
            <person name="Howland T.J."/>
            <person name="Wei M.-H."/>
            <person name="Ibegwam C."/>
            <person name="Jalali M."/>
            <person name="Kalush F."/>
            <person name="Karpen G.H."/>
            <person name="Ke Z."/>
            <person name="Kennison J.A."/>
            <person name="Ketchum K.A."/>
            <person name="Kimmel B.E."/>
            <person name="Kodira C.D."/>
            <person name="Kraft C.L."/>
            <person name="Kravitz S."/>
            <person name="Kulp D."/>
            <person name="Lai Z."/>
            <person name="Lasko P."/>
            <person name="Lei Y."/>
            <person name="Levitsky A.A."/>
            <person name="Li J.H."/>
            <person name="Li Z."/>
            <person name="Liang Y."/>
            <person name="Lin X."/>
            <person name="Liu X."/>
            <person name="Mattei B."/>
            <person name="McIntosh T.C."/>
            <person name="McLeod M.P."/>
            <person name="McPherson D."/>
            <person name="Merkulov G."/>
            <person name="Milshina N.V."/>
            <person name="Mobarry C."/>
            <person name="Morris J."/>
            <person name="Moshrefi A."/>
            <person name="Mount S.M."/>
            <person name="Moy M."/>
            <person name="Murphy B."/>
            <person name="Murphy L."/>
            <person name="Muzny D.M."/>
            <person name="Nelson D.L."/>
            <person name="Nelson D.R."/>
            <person name="Nelson K.A."/>
            <person name="Nixon K."/>
            <person name="Nusskern D.R."/>
            <person name="Pacleb J.M."/>
            <person name="Palazzolo M."/>
            <person name="Pittman G.S."/>
            <person name="Pan S."/>
            <person name="Pollard J."/>
            <person name="Puri V."/>
            <person name="Reese M.G."/>
            <person name="Reinert K."/>
            <person name="Remington K."/>
            <person name="Saunders R.D.C."/>
            <person name="Scheeler F."/>
            <person name="Shen H."/>
            <person name="Shue B.C."/>
            <person name="Siden-Kiamos I."/>
            <person name="Simpson M."/>
            <person name="Skupski M.P."/>
            <person name="Smith T.J."/>
            <person name="Spier E."/>
            <person name="Spradling A.C."/>
            <person name="Stapleton M."/>
            <person name="Strong R."/>
            <person name="Sun E."/>
            <person name="Svirskas R."/>
            <person name="Tector C."/>
            <person name="Turner R."/>
            <person name="Venter E."/>
            <person name="Wang A.H."/>
            <person name="Wang X."/>
            <person name="Wang Z.-Y."/>
            <person name="Wassarman D.A."/>
            <person name="Weinstock G.M."/>
            <person name="Weissenbach J."/>
            <person name="Williams S.M."/>
            <person name="Woodage T."/>
            <person name="Worley K.C."/>
            <person name="Wu D."/>
            <person name="Yang S."/>
            <person name="Yao Q.A."/>
            <person name="Ye J."/>
            <person name="Yeh R.-F."/>
            <person name="Zaveri J.S."/>
            <person name="Zhan M."/>
            <person name="Zhang G."/>
            <person name="Zhao Q."/>
            <person name="Zheng L."/>
            <person name="Zheng X.H."/>
            <person name="Zhong F.N."/>
            <person name="Zhong W."/>
            <person name="Zhou X."/>
            <person name="Zhu S.C."/>
            <person name="Zhu X."/>
            <person name="Smith H.O."/>
            <person name="Gibbs R.A."/>
            <person name="Myers E.W."/>
            <person name="Rubin G.M."/>
            <person name="Venter J.C."/>
        </authorList>
    </citation>
    <scope>NUCLEOTIDE SEQUENCE [LARGE SCALE GENOMIC DNA]</scope>
    <source>
        <strain>Berkeley</strain>
    </source>
</reference>
<reference key="3">
    <citation type="journal article" date="2002" name="Genome Biol.">
        <title>Annotation of the Drosophila melanogaster euchromatic genome: a systematic review.</title>
        <authorList>
            <person name="Misra S."/>
            <person name="Crosby M.A."/>
            <person name="Mungall C.J."/>
            <person name="Matthews B.B."/>
            <person name="Campbell K.S."/>
            <person name="Hradecky P."/>
            <person name="Huang Y."/>
            <person name="Kaminker J.S."/>
            <person name="Millburn G.H."/>
            <person name="Prochnik S.E."/>
            <person name="Smith C.D."/>
            <person name="Tupy J.L."/>
            <person name="Whitfield E.J."/>
            <person name="Bayraktaroglu L."/>
            <person name="Berman B.P."/>
            <person name="Bettencourt B.R."/>
            <person name="Celniker S.E."/>
            <person name="de Grey A.D.N.J."/>
            <person name="Drysdale R.A."/>
            <person name="Harris N.L."/>
            <person name="Richter J."/>
            <person name="Russo S."/>
            <person name="Schroeder A.J."/>
            <person name="Shu S.Q."/>
            <person name="Stapleton M."/>
            <person name="Yamada C."/>
            <person name="Ashburner M."/>
            <person name="Gelbart W.M."/>
            <person name="Rubin G.M."/>
            <person name="Lewis S.E."/>
        </authorList>
    </citation>
    <scope>GENOME REANNOTATION</scope>
    <source>
        <strain>Berkeley</strain>
    </source>
</reference>
<reference key="4">
    <citation type="journal article" date="2002" name="Genome Biol.">
        <title>A Drosophila full-length cDNA resource.</title>
        <authorList>
            <person name="Stapleton M."/>
            <person name="Carlson J.W."/>
            <person name="Brokstein P."/>
            <person name="Yu C."/>
            <person name="Champe M."/>
            <person name="George R.A."/>
            <person name="Guarin H."/>
            <person name="Kronmiller B."/>
            <person name="Pacleb J.M."/>
            <person name="Park S."/>
            <person name="Wan K.H."/>
            <person name="Rubin G.M."/>
            <person name="Celniker S.E."/>
        </authorList>
    </citation>
    <scope>NUCLEOTIDE SEQUENCE [LARGE SCALE MRNA]</scope>
    <source>
        <strain>Berkeley</strain>
        <tissue>Embryo</tissue>
    </source>
</reference>
<reference key="5">
    <citation type="submission" date="2009-01" db="EMBL/GenBank/DDBJ databases">
        <authorList>
            <person name="Carlson J.W."/>
            <person name="Booth B."/>
            <person name="Frise E."/>
            <person name="Park S."/>
            <person name="Wan K.H."/>
            <person name="Yu C."/>
            <person name="Celniker S.E."/>
        </authorList>
    </citation>
    <scope>NUCLEOTIDE SEQUENCE [LARGE SCALE MRNA]</scope>
    <source>
        <strain>Berkeley</strain>
    </source>
</reference>
<reference key="6">
    <citation type="journal article" date="1994" name="Nature">
        <title>Activation of the kinase Pelle by Tube in the dorsoventral signal transduction pathway of Drosophila embryo.</title>
        <authorList>
            <person name="Grosshans J."/>
            <person name="Bergmann A."/>
            <person name="Haffter P."/>
            <person name="Nuesslein-Volhard C."/>
        </authorList>
    </citation>
    <scope>FUNCTION</scope>
    <scope>INTERACTION WITH TUB</scope>
</reference>
<reference key="7">
    <citation type="journal article" date="1995" name="Development">
        <title>Interaction of the pelle kinase with the membrane-associated protein tube is required for transduction of the dorsoventral signal in Drosophila embryos.</title>
        <authorList>
            <person name="Galindo R.L."/>
            <person name="Edwards D.N."/>
            <person name="Gillespie S.K.H."/>
            <person name="Wasserman S.A."/>
        </authorList>
    </citation>
    <scope>FUNCTION</scope>
    <scope>INTERACTION WITH TUB</scope>
    <scope>SUBCELLULAR LOCATION</scope>
</reference>
<reference key="8">
    <citation type="journal article" date="1999" name="Mech. Dev.">
        <title>Oligomerisation of Tube and Pelle leads to nuclear localisation of dorsal.</title>
        <authorList>
            <person name="Grosshans J."/>
            <person name="Schnorrer F."/>
            <person name="Nuesslein-Volhard C."/>
        </authorList>
    </citation>
    <scope>FUNCTION</scope>
    <scope>INTERACTION WITH PLI AND TUB</scope>
</reference>
<reference key="9">
    <citation type="journal article" date="1999" name="Cell">
        <title>Three-dimensional structure of a complex between the death domains of Pelle and Tube.</title>
        <authorList>
            <person name="Xiao T."/>
            <person name="Towb P."/>
            <person name="Wasserman S.A."/>
            <person name="Sprang S.R."/>
        </authorList>
    </citation>
    <scope>X-RAY CRYSTALLOGRAPHY (2.0 ANGSTROMS) OF 26-129 IN COMPLEX WITH TUB</scope>
</reference>
<dbReference type="EC" id="2.7.11.1" evidence="9"/>
<dbReference type="EMBL" id="L08476">
    <property type="protein sequence ID" value="AAA28750.1"/>
    <property type="molecule type" value="mRNA"/>
</dbReference>
<dbReference type="EMBL" id="AE014297">
    <property type="protein sequence ID" value="AAF56686.1"/>
    <property type="molecule type" value="Genomic_DNA"/>
</dbReference>
<dbReference type="EMBL" id="AY069657">
    <property type="protein sequence ID" value="AAL39802.1"/>
    <property type="status" value="ALT_TERM"/>
    <property type="molecule type" value="mRNA"/>
</dbReference>
<dbReference type="EMBL" id="BT056264">
    <property type="protein sequence ID" value="ACL68711.1"/>
    <property type="molecule type" value="mRNA"/>
</dbReference>
<dbReference type="PIR" id="A45775">
    <property type="entry name" value="A45775"/>
</dbReference>
<dbReference type="RefSeq" id="NP_001263008.1">
    <property type="nucleotide sequence ID" value="NM_001276079.1"/>
</dbReference>
<dbReference type="RefSeq" id="NP_476971.1">
    <property type="nucleotide sequence ID" value="NM_057623.4"/>
</dbReference>
<dbReference type="PDB" id="1D2Z">
    <property type="method" value="X-ray"/>
    <property type="resolution" value="2.00 A"/>
    <property type="chains" value="A/C=26-129"/>
</dbReference>
<dbReference type="PDB" id="1IK7">
    <property type="method" value="X-ray"/>
    <property type="resolution" value="2.30 A"/>
    <property type="chains" value="A/B=26-129"/>
</dbReference>
<dbReference type="PDB" id="1YGO">
    <property type="method" value="NMR"/>
    <property type="chains" value="A=26-131"/>
</dbReference>
<dbReference type="PDBsum" id="1D2Z"/>
<dbReference type="PDBsum" id="1IK7"/>
<dbReference type="PDBsum" id="1YGO"/>
<dbReference type="SMR" id="Q05652"/>
<dbReference type="BioGRID" id="68170">
    <property type="interactions" value="14"/>
</dbReference>
<dbReference type="DIP" id="DIP-27622N"/>
<dbReference type="FunCoup" id="Q05652">
    <property type="interactions" value="1808"/>
</dbReference>
<dbReference type="IntAct" id="Q05652">
    <property type="interactions" value="7"/>
</dbReference>
<dbReference type="MINT" id="Q05652"/>
<dbReference type="STRING" id="7227.FBpp0084549"/>
<dbReference type="PaxDb" id="7227-FBpp0084549"/>
<dbReference type="DNASU" id="43283"/>
<dbReference type="EnsemblMetazoa" id="FBtr0085179">
    <property type="protein sequence ID" value="FBpp0084549"/>
    <property type="gene ID" value="FBgn0010441"/>
</dbReference>
<dbReference type="EnsemblMetazoa" id="FBtr0334732">
    <property type="protein sequence ID" value="FBpp0306780"/>
    <property type="gene ID" value="FBgn0010441"/>
</dbReference>
<dbReference type="GeneID" id="43283"/>
<dbReference type="KEGG" id="dme:Dmel_CG5974"/>
<dbReference type="UCSC" id="CG5974-RA">
    <property type="organism name" value="d. melanogaster"/>
</dbReference>
<dbReference type="AGR" id="FB:FBgn0010441"/>
<dbReference type="CTD" id="43283"/>
<dbReference type="FlyBase" id="FBgn0010441">
    <property type="gene designation" value="pll"/>
</dbReference>
<dbReference type="VEuPathDB" id="VectorBase:FBgn0010441"/>
<dbReference type="eggNOG" id="KOG1187">
    <property type="taxonomic scope" value="Eukaryota"/>
</dbReference>
<dbReference type="GeneTree" id="ENSGT00940000169271"/>
<dbReference type="HOGENOM" id="CLU_000288_21_15_1"/>
<dbReference type="InParanoid" id="Q05652"/>
<dbReference type="OMA" id="MQHYQSM"/>
<dbReference type="OrthoDB" id="4062651at2759"/>
<dbReference type="PhylomeDB" id="Q05652"/>
<dbReference type="Reactome" id="R-DME-214842">
    <property type="pathway name" value="DL and DIF homodimers bind to TUB and phosphorylated PLL in the TL receptor 'signalling complex'"/>
</dbReference>
<dbReference type="Reactome" id="R-DME-214844">
    <property type="pathway name" value="DL and DIF homodimers complexed with CACT are all phosphorylated in the TL receptor 'signalling complex'"/>
</dbReference>
<dbReference type="Reactome" id="R-DME-214862">
    <property type="pathway name" value="Activated PLL kinase is autophosphorylated in the TL receptor 'signalling complex'"/>
</dbReference>
<dbReference type="Reactome" id="R-DME-214869">
    <property type="pathway name" value="Phosphorylated CACT, DL and DIF homodimers dissociate from the TL receptor 'signalling complex'"/>
</dbReference>
<dbReference type="Reactome" id="R-DME-214874">
    <property type="pathway name" value="PLL kinase binds to TUB in the TL receptor 'signalling complex'"/>
</dbReference>
<dbReference type="Reactome" id="R-DME-445989">
    <property type="pathway name" value="TAK1-dependent IKK and NF-kappa-B activation"/>
</dbReference>
<dbReference type="Reactome" id="R-DME-450302">
    <property type="pathway name" value="activated TAK1 mediates p38 MAPK activation"/>
</dbReference>
<dbReference type="Reactome" id="R-DME-450321">
    <property type="pathway name" value="JNK (c-Jun kinases) phosphorylation and activation mediated by activated human TAK1"/>
</dbReference>
<dbReference type="Reactome" id="R-DME-9020702">
    <property type="pathway name" value="Interleukin-1 signaling"/>
</dbReference>
<dbReference type="Reactome" id="R-DME-937039">
    <property type="pathway name" value="IRAK1 recruits IKK complex"/>
</dbReference>
<dbReference type="Reactome" id="R-DME-937042">
    <property type="pathway name" value="IRAK2 mediated activation of TAK1 complex"/>
</dbReference>
<dbReference type="Reactome" id="R-DME-937072">
    <property type="pathway name" value="TRAF6-mediated induction of TAK1 complex within TLR4 complex"/>
</dbReference>
<dbReference type="Reactome" id="R-DME-975144">
    <property type="pathway name" value="IRAK1 recruits IKK complex upon TLR7/8 or 9 stimulation"/>
</dbReference>
<dbReference type="Reactome" id="R-DME-975163">
    <property type="pathway name" value="IRAK2 mediated activation of TAK1 complex upon TLR7/8 or 9 stimulation"/>
</dbReference>
<dbReference type="SignaLink" id="Q05652"/>
<dbReference type="BioGRID-ORCS" id="43283">
    <property type="hits" value="0 hits in 3 CRISPR screens"/>
</dbReference>
<dbReference type="EvolutionaryTrace" id="Q05652"/>
<dbReference type="GenomeRNAi" id="43283"/>
<dbReference type="PRO" id="PR:Q05652"/>
<dbReference type="Proteomes" id="UP000000803">
    <property type="component" value="Chromosome 3R"/>
</dbReference>
<dbReference type="Bgee" id="FBgn0010441">
    <property type="expression patterns" value="Expressed in adult oenocyte (Drosophila) in body wall and 78 other cell types or tissues"/>
</dbReference>
<dbReference type="ExpressionAtlas" id="Q05652">
    <property type="expression patterns" value="baseline and differential"/>
</dbReference>
<dbReference type="GO" id="GO:0005737">
    <property type="term" value="C:cytoplasm"/>
    <property type="evidence" value="ECO:0000314"/>
    <property type="project" value="UniProtKB"/>
</dbReference>
<dbReference type="GO" id="GO:0005829">
    <property type="term" value="C:cytosol"/>
    <property type="evidence" value="ECO:0000304"/>
    <property type="project" value="Reactome"/>
</dbReference>
<dbReference type="GO" id="GO:0005634">
    <property type="term" value="C:nucleus"/>
    <property type="evidence" value="ECO:0000318"/>
    <property type="project" value="GO_Central"/>
</dbReference>
<dbReference type="GO" id="GO:0005886">
    <property type="term" value="C:plasma membrane"/>
    <property type="evidence" value="ECO:0000314"/>
    <property type="project" value="UniProtKB"/>
</dbReference>
<dbReference type="GO" id="GO:0005524">
    <property type="term" value="F:ATP binding"/>
    <property type="evidence" value="ECO:0007669"/>
    <property type="project" value="UniProtKB-KW"/>
</dbReference>
<dbReference type="GO" id="GO:0019904">
    <property type="term" value="F:protein domain specific binding"/>
    <property type="evidence" value="ECO:0000353"/>
    <property type="project" value="UniProtKB"/>
</dbReference>
<dbReference type="GO" id="GO:0106310">
    <property type="term" value="F:protein serine kinase activity"/>
    <property type="evidence" value="ECO:0007669"/>
    <property type="project" value="RHEA"/>
</dbReference>
<dbReference type="GO" id="GO:0004674">
    <property type="term" value="F:protein serine/threonine kinase activity"/>
    <property type="evidence" value="ECO:0000314"/>
    <property type="project" value="FlyBase"/>
</dbReference>
<dbReference type="GO" id="GO:0061760">
    <property type="term" value="P:antifungal innate immune response"/>
    <property type="evidence" value="ECO:0000315"/>
    <property type="project" value="FlyBase"/>
</dbReference>
<dbReference type="GO" id="GO:0006915">
    <property type="term" value="P:apoptotic process"/>
    <property type="evidence" value="ECO:0000303"/>
    <property type="project" value="UniProtKB"/>
</dbReference>
<dbReference type="GO" id="GO:0019221">
    <property type="term" value="P:cytokine-mediated signaling pathway"/>
    <property type="evidence" value="ECO:0000318"/>
    <property type="project" value="GO_Central"/>
</dbReference>
<dbReference type="GO" id="GO:0048262">
    <property type="term" value="P:determination of dorsal/ventral asymmetry"/>
    <property type="evidence" value="ECO:0000315"/>
    <property type="project" value="UniProtKB"/>
</dbReference>
<dbReference type="GO" id="GO:0009953">
    <property type="term" value="P:dorsal/ventral pattern formation"/>
    <property type="evidence" value="ECO:0000315"/>
    <property type="project" value="FlyBase"/>
</dbReference>
<dbReference type="GO" id="GO:0035172">
    <property type="term" value="P:hemocyte proliferation"/>
    <property type="evidence" value="ECO:0000304"/>
    <property type="project" value="FlyBase"/>
</dbReference>
<dbReference type="GO" id="GO:0045087">
    <property type="term" value="P:innate immune response"/>
    <property type="evidence" value="ECO:0000315"/>
    <property type="project" value="FlyBase"/>
</dbReference>
<dbReference type="GO" id="GO:0035556">
    <property type="term" value="P:intracellular signal transduction"/>
    <property type="evidence" value="ECO:0000318"/>
    <property type="project" value="GO_Central"/>
</dbReference>
<dbReference type="GO" id="GO:0007526">
    <property type="term" value="P:larval somatic muscle development"/>
    <property type="evidence" value="ECO:0000315"/>
    <property type="project" value="FlyBase"/>
</dbReference>
<dbReference type="GO" id="GO:0031663">
    <property type="term" value="P:lipopolysaccharide-mediated signaling pathway"/>
    <property type="evidence" value="ECO:0000318"/>
    <property type="project" value="GO_Central"/>
</dbReference>
<dbReference type="GO" id="GO:0002804">
    <property type="term" value="P:positive regulation of antifungal peptide production"/>
    <property type="evidence" value="ECO:0000314"/>
    <property type="project" value="FlyBase"/>
</dbReference>
<dbReference type="GO" id="GO:0035332">
    <property type="term" value="P:positive regulation of hippo signaling"/>
    <property type="evidence" value="ECO:0000316"/>
    <property type="project" value="FlyBase"/>
</dbReference>
<dbReference type="GO" id="GO:0045732">
    <property type="term" value="P:positive regulation of protein catabolic process"/>
    <property type="evidence" value="ECO:0000315"/>
    <property type="project" value="FlyBase"/>
</dbReference>
<dbReference type="GO" id="GO:2000060">
    <property type="term" value="P:positive regulation of ubiquitin-dependent protein catabolic process"/>
    <property type="evidence" value="ECO:0000315"/>
    <property type="project" value="FlyBase"/>
</dbReference>
<dbReference type="GO" id="GO:0008063">
    <property type="term" value="P:Toll signaling pathway"/>
    <property type="evidence" value="ECO:0000315"/>
    <property type="project" value="FlyBase"/>
</dbReference>
<dbReference type="GO" id="GO:0007352">
    <property type="term" value="P:zygotic specification of dorsal/ventral axis"/>
    <property type="evidence" value="ECO:0000315"/>
    <property type="project" value="FlyBase"/>
</dbReference>
<dbReference type="CDD" id="cd08307">
    <property type="entry name" value="Death_Pelle"/>
    <property type="match status" value="1"/>
</dbReference>
<dbReference type="CDD" id="cd14066">
    <property type="entry name" value="STKc_IRAK"/>
    <property type="match status" value="1"/>
</dbReference>
<dbReference type="FunFam" id="1.10.510.10:FF:000754">
    <property type="entry name" value="Interleukin-1 receptor-associated kinase"/>
    <property type="match status" value="1"/>
</dbReference>
<dbReference type="FunFam" id="3.30.200.20:FF:000572">
    <property type="entry name" value="Interleukin-1 receptor-associated kinase"/>
    <property type="match status" value="1"/>
</dbReference>
<dbReference type="Gene3D" id="3.30.200.20">
    <property type="entry name" value="Phosphorylase Kinase, domain 1"/>
    <property type="match status" value="1"/>
</dbReference>
<dbReference type="Gene3D" id="1.20.5.530">
    <property type="entry name" value="Single helix bin"/>
    <property type="match status" value="1"/>
</dbReference>
<dbReference type="Gene3D" id="1.10.510.10">
    <property type="entry name" value="Transferase(Phosphotransferase) domain 1"/>
    <property type="match status" value="1"/>
</dbReference>
<dbReference type="InterPro" id="IPR052059">
    <property type="entry name" value="CR_Ser/Thr_kinase"/>
</dbReference>
<dbReference type="InterPro" id="IPR011029">
    <property type="entry name" value="DEATH-like_dom_sf"/>
</dbReference>
<dbReference type="InterPro" id="IPR000488">
    <property type="entry name" value="Death_dom"/>
</dbReference>
<dbReference type="InterPro" id="IPR011009">
    <property type="entry name" value="Kinase-like_dom_sf"/>
</dbReference>
<dbReference type="InterPro" id="IPR037924">
    <property type="entry name" value="Pelle_death"/>
</dbReference>
<dbReference type="InterPro" id="IPR000719">
    <property type="entry name" value="Prot_kinase_dom"/>
</dbReference>
<dbReference type="InterPro" id="IPR017441">
    <property type="entry name" value="Protein_kinase_ATP_BS"/>
</dbReference>
<dbReference type="InterPro" id="IPR001245">
    <property type="entry name" value="Ser-Thr/Tyr_kinase_cat_dom"/>
</dbReference>
<dbReference type="InterPro" id="IPR008271">
    <property type="entry name" value="Ser/Thr_kinase_AS"/>
</dbReference>
<dbReference type="PANTHER" id="PTHR47973">
    <property type="entry name" value="CYSTEINE-RICH RECEPTOR-LIKE PROTEIN KINASE 3"/>
    <property type="match status" value="1"/>
</dbReference>
<dbReference type="Pfam" id="PF00531">
    <property type="entry name" value="Death"/>
    <property type="match status" value="1"/>
</dbReference>
<dbReference type="Pfam" id="PF07714">
    <property type="entry name" value="PK_Tyr_Ser-Thr"/>
    <property type="match status" value="1"/>
</dbReference>
<dbReference type="SMART" id="SM00005">
    <property type="entry name" value="DEATH"/>
    <property type="match status" value="1"/>
</dbReference>
<dbReference type="SMART" id="SM00220">
    <property type="entry name" value="S_TKc"/>
    <property type="match status" value="1"/>
</dbReference>
<dbReference type="SUPFAM" id="SSF47986">
    <property type="entry name" value="DEATH domain"/>
    <property type="match status" value="1"/>
</dbReference>
<dbReference type="SUPFAM" id="SSF56112">
    <property type="entry name" value="Protein kinase-like (PK-like)"/>
    <property type="match status" value="1"/>
</dbReference>
<dbReference type="PROSITE" id="PS50017">
    <property type="entry name" value="DEATH_DOMAIN"/>
    <property type="match status" value="1"/>
</dbReference>
<dbReference type="PROSITE" id="PS00107">
    <property type="entry name" value="PROTEIN_KINASE_ATP"/>
    <property type="match status" value="1"/>
</dbReference>
<dbReference type="PROSITE" id="PS50011">
    <property type="entry name" value="PROTEIN_KINASE_DOM"/>
    <property type="match status" value="1"/>
</dbReference>
<dbReference type="PROSITE" id="PS00108">
    <property type="entry name" value="PROTEIN_KINASE_ST"/>
    <property type="match status" value="1"/>
</dbReference>
<keyword id="KW-0002">3D-structure</keyword>
<keyword id="KW-0067">ATP-binding</keyword>
<keyword id="KW-1003">Cell membrane</keyword>
<keyword id="KW-0963">Cytoplasm</keyword>
<keyword id="KW-0418">Kinase</keyword>
<keyword id="KW-0472">Membrane</keyword>
<keyword id="KW-0547">Nucleotide-binding</keyword>
<keyword id="KW-1185">Reference proteome</keyword>
<keyword id="KW-0723">Serine/threonine-protein kinase</keyword>
<keyword id="KW-0808">Transferase</keyword>
<name>KPEL_DROME</name>
<evidence type="ECO:0000255" key="1">
    <source>
        <dbReference type="PROSITE-ProRule" id="PRU00064"/>
    </source>
</evidence>
<evidence type="ECO:0000255" key="2">
    <source>
        <dbReference type="PROSITE-ProRule" id="PRU00159"/>
    </source>
</evidence>
<evidence type="ECO:0000255" key="3">
    <source>
        <dbReference type="PROSITE-ProRule" id="PRU10027"/>
    </source>
</evidence>
<evidence type="ECO:0000256" key="4">
    <source>
        <dbReference type="SAM" id="MobiDB-lite"/>
    </source>
</evidence>
<evidence type="ECO:0000269" key="5">
    <source>
    </source>
</evidence>
<evidence type="ECO:0000269" key="6">
    <source>
    </source>
</evidence>
<evidence type="ECO:0000269" key="7">
    <source>
    </source>
</evidence>
<evidence type="ECO:0000269" key="8">
    <source>
    </source>
</evidence>
<evidence type="ECO:0000269" key="9">
    <source>
    </source>
</evidence>
<evidence type="ECO:0000305" key="10"/>
<evidence type="ECO:0007829" key="11">
    <source>
        <dbReference type="PDB" id="1D2Z"/>
    </source>
</evidence>
<gene>
    <name type="primary">pll</name>
    <name type="ORF">CG5974</name>
</gene>
<protein>
    <recommendedName>
        <fullName>Serine/threonine-protein kinase pelle</fullName>
        <ecNumber evidence="9">2.7.11.1</ecNumber>
    </recommendedName>
</protein>
<organism>
    <name type="scientific">Drosophila melanogaster</name>
    <name type="common">Fruit fly</name>
    <dbReference type="NCBI Taxonomy" id="7227"/>
    <lineage>
        <taxon>Eukaryota</taxon>
        <taxon>Metazoa</taxon>
        <taxon>Ecdysozoa</taxon>
        <taxon>Arthropoda</taxon>
        <taxon>Hexapoda</taxon>
        <taxon>Insecta</taxon>
        <taxon>Pterygota</taxon>
        <taxon>Neoptera</taxon>
        <taxon>Endopterygota</taxon>
        <taxon>Diptera</taxon>
        <taxon>Brachycera</taxon>
        <taxon>Muscomorpha</taxon>
        <taxon>Ephydroidea</taxon>
        <taxon>Drosophilidae</taxon>
        <taxon>Drosophila</taxon>
        <taxon>Sophophora</taxon>
    </lineage>
</organism>
<accession>Q05652</accession>
<accession>B8A3X2</accession>
<accession>Q8T005</accession>
<accession>Q9VB57</accession>
<proteinExistence type="evidence at protein level"/>
<feature type="chain" id="PRO_0000086161" description="Serine/threonine-protein kinase pelle">
    <location>
        <begin position="1"/>
        <end position="501"/>
    </location>
</feature>
<feature type="domain" description="Death" evidence="1">
    <location>
        <begin position="55"/>
        <end position="121"/>
    </location>
</feature>
<feature type="domain" description="Protein kinase" evidence="2">
    <location>
        <begin position="213"/>
        <end position="499"/>
    </location>
</feature>
<feature type="region of interest" description="Disordered" evidence="4">
    <location>
        <begin position="1"/>
        <end position="25"/>
    </location>
</feature>
<feature type="region of interest" description="Disordered" evidence="4">
    <location>
        <begin position="144"/>
        <end position="176"/>
    </location>
</feature>
<feature type="compositionally biased region" description="Low complexity" evidence="4">
    <location>
        <begin position="7"/>
        <end position="18"/>
    </location>
</feature>
<feature type="compositionally biased region" description="Low complexity" evidence="4">
    <location>
        <begin position="149"/>
        <end position="167"/>
    </location>
</feature>
<feature type="active site" description="Proton acceptor" evidence="2 3">
    <location>
        <position position="346"/>
    </location>
</feature>
<feature type="binding site" evidence="2">
    <location>
        <begin position="219"/>
        <end position="227"/>
    </location>
    <ligand>
        <name>ATP</name>
        <dbReference type="ChEBI" id="CHEBI:30616"/>
    </ligand>
</feature>
<feature type="binding site">
    <location>
        <position position="240"/>
    </location>
    <ligand>
        <name>ATP</name>
        <dbReference type="ChEBI" id="CHEBI:30616"/>
    </ligand>
</feature>
<feature type="binding site" evidence="2">
    <location>
        <begin position="348"/>
        <end position="351"/>
    </location>
    <ligand>
        <name>ATP</name>
        <dbReference type="ChEBI" id="CHEBI:30616"/>
    </ligand>
</feature>
<feature type="binding site" evidence="2">
    <location>
        <position position="364"/>
    </location>
    <ligand>
        <name>ATP</name>
        <dbReference type="ChEBI" id="CHEBI:30616"/>
    </ligand>
</feature>
<feature type="mutagenesis site" description="Abolishes activity." evidence="9">
    <original>K</original>
    <variation>R</variation>
    <location>
        <position position="240"/>
    </location>
</feature>
<feature type="mutagenesis site" description="Reduced activity." evidence="9">
    <original>D</original>
    <variation>A</variation>
    <location>
        <position position="346"/>
    </location>
</feature>
<feature type="mutagenesis site" description="Reduced activity." evidence="9">
    <original>A</original>
    <variation>E</variation>
    <location>
        <position position="350"/>
    </location>
</feature>
<feature type="helix" evidence="11">
    <location>
        <begin position="34"/>
        <end position="36"/>
    </location>
</feature>
<feature type="helix" evidence="11">
    <location>
        <begin position="39"/>
        <end position="52"/>
    </location>
</feature>
<feature type="helix" evidence="11">
    <location>
        <begin position="55"/>
        <end position="61"/>
    </location>
</feature>
<feature type="helix" evidence="11">
    <location>
        <begin position="66"/>
        <end position="77"/>
    </location>
</feature>
<feature type="helix" evidence="11">
    <location>
        <begin position="82"/>
        <end position="94"/>
    </location>
</feature>
<feature type="helix" evidence="11">
    <location>
        <begin position="98"/>
        <end position="107"/>
    </location>
</feature>
<feature type="helix" evidence="11">
    <location>
        <begin position="111"/>
        <end position="116"/>
    </location>
</feature>
<feature type="helix" evidence="11">
    <location>
        <begin position="117"/>
        <end position="120"/>
    </location>
</feature>
<feature type="helix" evidence="11">
    <location>
        <begin position="123"/>
        <end position="128"/>
    </location>
</feature>
<sequence>MSGVQTAEAEAQAQNQANGNRTRSRSHLDNTMAIRLLPLPVRAQLCAHLDALDVWQQLATAVKLYPDQVEQISSQKQRGRSASNEFLNIWGGQYNHTVQTLFALFKKLKLHNAMRLIKDYVSEDLHKYIPRSVPTISELRAAPDSSAKVNNGPPFPSSSGVSNSNNNRTSTTATEEIPSLESLGNIHISTVQRAAESLLEIDYAELENATDGWSPDNRLGQGGFGDVYRGKWKQLDVAIKVMNYRSPNIDQKMVELQQSYNELKYLNSIRHDNILALYGYSIKGGKPCLVYQLMKGGSLEARLRAHKAQNPLPALTWQQRFSISLGTARGIYFLHTARGTPLIHGDIKPANILLDQCLQPKIGDFGLVREGPKSLDAVVEVNKVFGTKIYLPPEFRNFRQLSTGVDVYSFGIVLLEVFTGRQVTDRVPENETKKNLLDYVKQQWRQNRMELLEKHLAAPMGKELDMCMCAIEAGLHCTALDPQDRPSMNAVLKRFEPFVTD</sequence>